<keyword id="KW-1003">Cell membrane</keyword>
<keyword id="KW-0285">Flavoprotein</keyword>
<keyword id="KW-0288">FMN</keyword>
<keyword id="KW-0472">Membrane</keyword>
<keyword id="KW-0560">Oxidoreductase</keyword>
<keyword id="KW-0665">Pyrimidine biosynthesis</keyword>
<keyword id="KW-1185">Reference proteome</keyword>
<accession>Q2IR55</accession>
<organism>
    <name type="scientific">Rhodopseudomonas palustris (strain HaA2)</name>
    <dbReference type="NCBI Taxonomy" id="316058"/>
    <lineage>
        <taxon>Bacteria</taxon>
        <taxon>Pseudomonadati</taxon>
        <taxon>Pseudomonadota</taxon>
        <taxon>Alphaproteobacteria</taxon>
        <taxon>Hyphomicrobiales</taxon>
        <taxon>Nitrobacteraceae</taxon>
        <taxon>Rhodopseudomonas</taxon>
    </lineage>
</organism>
<proteinExistence type="inferred from homology"/>
<name>PYRD_RHOP2</name>
<gene>
    <name evidence="1" type="primary">pyrD</name>
    <name type="ordered locus">RPB_4622</name>
</gene>
<comment type="function">
    <text evidence="1">Catalyzes the conversion of dihydroorotate to orotate with quinone as electron acceptor.</text>
</comment>
<comment type="catalytic activity">
    <reaction evidence="1">
        <text>(S)-dihydroorotate + a quinone = orotate + a quinol</text>
        <dbReference type="Rhea" id="RHEA:30187"/>
        <dbReference type="ChEBI" id="CHEBI:24646"/>
        <dbReference type="ChEBI" id="CHEBI:30839"/>
        <dbReference type="ChEBI" id="CHEBI:30864"/>
        <dbReference type="ChEBI" id="CHEBI:132124"/>
        <dbReference type="EC" id="1.3.5.2"/>
    </reaction>
</comment>
<comment type="cofactor">
    <cofactor evidence="1">
        <name>FMN</name>
        <dbReference type="ChEBI" id="CHEBI:58210"/>
    </cofactor>
    <text evidence="1">Binds 1 FMN per subunit.</text>
</comment>
<comment type="pathway">
    <text evidence="1">Pyrimidine metabolism; UMP biosynthesis via de novo pathway; orotate from (S)-dihydroorotate (quinone route): step 1/1.</text>
</comment>
<comment type="subunit">
    <text evidence="1">Monomer.</text>
</comment>
<comment type="subcellular location">
    <subcellularLocation>
        <location evidence="1">Cell membrane</location>
        <topology evidence="1">Peripheral membrane protein</topology>
    </subcellularLocation>
</comment>
<comment type="similarity">
    <text evidence="1">Belongs to the dihydroorotate dehydrogenase family. Type 2 subfamily.</text>
</comment>
<protein>
    <recommendedName>
        <fullName evidence="1">Dihydroorotate dehydrogenase (quinone)</fullName>
        <ecNumber evidence="1">1.3.5.2</ecNumber>
    </recommendedName>
    <alternativeName>
        <fullName evidence="1">DHOdehase</fullName>
        <shortName evidence="1">DHOD</shortName>
        <shortName evidence="1">DHODase</shortName>
    </alternativeName>
    <alternativeName>
        <fullName evidence="1">Dihydroorotate oxidase</fullName>
    </alternativeName>
</protein>
<reference key="1">
    <citation type="submission" date="2006-01" db="EMBL/GenBank/DDBJ databases">
        <title>Complete sequence of Rhodopseudomonas palustris HaA2.</title>
        <authorList>
            <consortium name="US DOE Joint Genome Institute"/>
            <person name="Copeland A."/>
            <person name="Lucas S."/>
            <person name="Lapidus A."/>
            <person name="Barry K."/>
            <person name="Detter J.C."/>
            <person name="Glavina T."/>
            <person name="Hammon N."/>
            <person name="Israni S."/>
            <person name="Pitluck S."/>
            <person name="Chain P."/>
            <person name="Malfatti S."/>
            <person name="Shin M."/>
            <person name="Vergez L."/>
            <person name="Schmutz J."/>
            <person name="Larimer F."/>
            <person name="Land M."/>
            <person name="Hauser L."/>
            <person name="Pelletier D.A."/>
            <person name="Kyrpides N."/>
            <person name="Anderson I."/>
            <person name="Oda Y."/>
            <person name="Harwood C.S."/>
            <person name="Richardson P."/>
        </authorList>
    </citation>
    <scope>NUCLEOTIDE SEQUENCE [LARGE SCALE GENOMIC DNA]</scope>
    <source>
        <strain>HaA2</strain>
    </source>
</reference>
<feature type="chain" id="PRO_1000024216" description="Dihydroorotate dehydrogenase (quinone)">
    <location>
        <begin position="1"/>
        <end position="364"/>
    </location>
</feature>
<feature type="active site" description="Nucleophile" evidence="1">
    <location>
        <position position="173"/>
    </location>
</feature>
<feature type="binding site" evidence="1">
    <location>
        <begin position="61"/>
        <end position="65"/>
    </location>
    <ligand>
        <name>FMN</name>
        <dbReference type="ChEBI" id="CHEBI:58210"/>
    </ligand>
</feature>
<feature type="binding site" evidence="1">
    <location>
        <position position="65"/>
    </location>
    <ligand>
        <name>substrate</name>
    </ligand>
</feature>
<feature type="binding site" evidence="1">
    <location>
        <position position="85"/>
    </location>
    <ligand>
        <name>FMN</name>
        <dbReference type="ChEBI" id="CHEBI:58210"/>
    </ligand>
</feature>
<feature type="binding site" evidence="1">
    <location>
        <begin position="110"/>
        <end position="114"/>
    </location>
    <ligand>
        <name>substrate</name>
    </ligand>
</feature>
<feature type="binding site" evidence="1">
    <location>
        <position position="139"/>
    </location>
    <ligand>
        <name>FMN</name>
        <dbReference type="ChEBI" id="CHEBI:58210"/>
    </ligand>
</feature>
<feature type="binding site" evidence="1">
    <location>
        <position position="170"/>
    </location>
    <ligand>
        <name>FMN</name>
        <dbReference type="ChEBI" id="CHEBI:58210"/>
    </ligand>
</feature>
<feature type="binding site" evidence="1">
    <location>
        <position position="170"/>
    </location>
    <ligand>
        <name>substrate</name>
    </ligand>
</feature>
<feature type="binding site" evidence="1">
    <location>
        <position position="175"/>
    </location>
    <ligand>
        <name>substrate</name>
    </ligand>
</feature>
<feature type="binding site" evidence="1">
    <location>
        <position position="214"/>
    </location>
    <ligand>
        <name>FMN</name>
        <dbReference type="ChEBI" id="CHEBI:58210"/>
    </ligand>
</feature>
<feature type="binding site" evidence="1">
    <location>
        <position position="242"/>
    </location>
    <ligand>
        <name>FMN</name>
        <dbReference type="ChEBI" id="CHEBI:58210"/>
    </ligand>
</feature>
<feature type="binding site" evidence="1">
    <location>
        <begin position="243"/>
        <end position="244"/>
    </location>
    <ligand>
        <name>substrate</name>
    </ligand>
</feature>
<feature type="binding site" evidence="1">
    <location>
        <position position="266"/>
    </location>
    <ligand>
        <name>FMN</name>
        <dbReference type="ChEBI" id="CHEBI:58210"/>
    </ligand>
</feature>
<feature type="binding site" evidence="1">
    <location>
        <position position="295"/>
    </location>
    <ligand>
        <name>FMN</name>
        <dbReference type="ChEBI" id="CHEBI:58210"/>
    </ligand>
</feature>
<feature type="binding site" evidence="1">
    <location>
        <begin position="316"/>
        <end position="317"/>
    </location>
    <ligand>
        <name>FMN</name>
        <dbReference type="ChEBI" id="CHEBI:58210"/>
    </ligand>
</feature>
<sequence length="364" mass="39049">MIRAFDAFSLPLLRLLDAEDAHRLAIQGLRLLPQVKPRPDDSKLAVRAFGLNFPNPVGIAAGFDKNAEAPDALLRLGFGFVEIGTVTPKPQAGNPRPRLFRLERDEAIINRMGFNNDGAEAVLRRLAARAQQGGIVGVNVGANKDSTDRVADYVSLIETFAPVASYFTVNVSSPNTPGLRNLQQAAALDDLLARVIEARERVRASAGDTPVLLKIAPDLTLSELDDVVHIARSRRVDGMIVANTTLSRSPMLRERTRLNEQGGLSGRPLFRLSTRMVAETYVRAEGAFPLIGVGGIDSGGAALTKIRAGASLVQLYSALIYKGLGLVDSIKADLASTLLRTGRDSLSEIVGADAPTITAEEWPV</sequence>
<dbReference type="EC" id="1.3.5.2" evidence="1"/>
<dbReference type="EMBL" id="CP000250">
    <property type="protein sequence ID" value="ABD09305.1"/>
    <property type="molecule type" value="Genomic_DNA"/>
</dbReference>
<dbReference type="RefSeq" id="WP_011443487.1">
    <property type="nucleotide sequence ID" value="NC_007778.1"/>
</dbReference>
<dbReference type="SMR" id="Q2IR55"/>
<dbReference type="STRING" id="316058.RPB_4622"/>
<dbReference type="KEGG" id="rpb:RPB_4622"/>
<dbReference type="eggNOG" id="COG0167">
    <property type="taxonomic scope" value="Bacteria"/>
</dbReference>
<dbReference type="HOGENOM" id="CLU_013640_2_1_5"/>
<dbReference type="OrthoDB" id="9802377at2"/>
<dbReference type="UniPathway" id="UPA00070">
    <property type="reaction ID" value="UER00946"/>
</dbReference>
<dbReference type="Proteomes" id="UP000008809">
    <property type="component" value="Chromosome"/>
</dbReference>
<dbReference type="GO" id="GO:0005737">
    <property type="term" value="C:cytoplasm"/>
    <property type="evidence" value="ECO:0007669"/>
    <property type="project" value="InterPro"/>
</dbReference>
<dbReference type="GO" id="GO:0005886">
    <property type="term" value="C:plasma membrane"/>
    <property type="evidence" value="ECO:0007669"/>
    <property type="project" value="UniProtKB-SubCell"/>
</dbReference>
<dbReference type="GO" id="GO:0106430">
    <property type="term" value="F:dihydroorotate dehydrogenase (quinone) activity"/>
    <property type="evidence" value="ECO:0007669"/>
    <property type="project" value="UniProtKB-EC"/>
</dbReference>
<dbReference type="GO" id="GO:0006207">
    <property type="term" value="P:'de novo' pyrimidine nucleobase biosynthetic process"/>
    <property type="evidence" value="ECO:0007669"/>
    <property type="project" value="InterPro"/>
</dbReference>
<dbReference type="GO" id="GO:0044205">
    <property type="term" value="P:'de novo' UMP biosynthetic process"/>
    <property type="evidence" value="ECO:0007669"/>
    <property type="project" value="UniProtKB-UniRule"/>
</dbReference>
<dbReference type="CDD" id="cd04738">
    <property type="entry name" value="DHOD_2_like"/>
    <property type="match status" value="1"/>
</dbReference>
<dbReference type="Gene3D" id="3.20.20.70">
    <property type="entry name" value="Aldolase class I"/>
    <property type="match status" value="1"/>
</dbReference>
<dbReference type="HAMAP" id="MF_00225">
    <property type="entry name" value="DHO_dh_type2"/>
    <property type="match status" value="1"/>
</dbReference>
<dbReference type="InterPro" id="IPR013785">
    <property type="entry name" value="Aldolase_TIM"/>
</dbReference>
<dbReference type="InterPro" id="IPR050074">
    <property type="entry name" value="DHO_dehydrogenase"/>
</dbReference>
<dbReference type="InterPro" id="IPR005719">
    <property type="entry name" value="Dihydroorotate_DH_2"/>
</dbReference>
<dbReference type="InterPro" id="IPR005720">
    <property type="entry name" value="Dihydroorotate_DH_cat"/>
</dbReference>
<dbReference type="InterPro" id="IPR001295">
    <property type="entry name" value="Dihydroorotate_DH_CS"/>
</dbReference>
<dbReference type="NCBIfam" id="NF003645">
    <property type="entry name" value="PRK05286.1-2"/>
    <property type="match status" value="1"/>
</dbReference>
<dbReference type="NCBIfam" id="NF003652">
    <property type="entry name" value="PRK05286.2-5"/>
    <property type="match status" value="1"/>
</dbReference>
<dbReference type="NCBIfam" id="TIGR01036">
    <property type="entry name" value="pyrD_sub2"/>
    <property type="match status" value="1"/>
</dbReference>
<dbReference type="PANTHER" id="PTHR48109:SF4">
    <property type="entry name" value="DIHYDROOROTATE DEHYDROGENASE (QUINONE), MITOCHONDRIAL"/>
    <property type="match status" value="1"/>
</dbReference>
<dbReference type="PANTHER" id="PTHR48109">
    <property type="entry name" value="DIHYDROOROTATE DEHYDROGENASE (QUINONE), MITOCHONDRIAL-RELATED"/>
    <property type="match status" value="1"/>
</dbReference>
<dbReference type="Pfam" id="PF01180">
    <property type="entry name" value="DHO_dh"/>
    <property type="match status" value="1"/>
</dbReference>
<dbReference type="SUPFAM" id="SSF51395">
    <property type="entry name" value="FMN-linked oxidoreductases"/>
    <property type="match status" value="1"/>
</dbReference>
<dbReference type="PROSITE" id="PS00911">
    <property type="entry name" value="DHODEHASE_1"/>
    <property type="match status" value="1"/>
</dbReference>
<dbReference type="PROSITE" id="PS00912">
    <property type="entry name" value="DHODEHASE_2"/>
    <property type="match status" value="1"/>
</dbReference>
<evidence type="ECO:0000255" key="1">
    <source>
        <dbReference type="HAMAP-Rule" id="MF_00225"/>
    </source>
</evidence>